<reference key="1">
    <citation type="journal article" date="2012" name="MBio">
        <title>Comparative genome analysis of Trichophyton rubrum and related dermatophytes reveals candidate genes involved in infection.</title>
        <authorList>
            <person name="Martinez D.A."/>
            <person name="Oliver B.G."/>
            <person name="Graeser Y."/>
            <person name="Goldberg J.M."/>
            <person name="Li W."/>
            <person name="Martinez-Rossi N.M."/>
            <person name="Monod M."/>
            <person name="Shelest E."/>
            <person name="Barton R.C."/>
            <person name="Birch E."/>
            <person name="Brakhage A.A."/>
            <person name="Chen Z."/>
            <person name="Gurr S.J."/>
            <person name="Heiman D."/>
            <person name="Heitman J."/>
            <person name="Kosti I."/>
            <person name="Rossi A."/>
            <person name="Saif S."/>
            <person name="Samalova M."/>
            <person name="Saunders C.W."/>
            <person name="Shea T."/>
            <person name="Summerbell R.C."/>
            <person name="Xu J."/>
            <person name="Young S."/>
            <person name="Zeng Q."/>
            <person name="Birren B.W."/>
            <person name="Cuomo C.A."/>
            <person name="White T.C."/>
        </authorList>
    </citation>
    <scope>NUCLEOTIDE SEQUENCE [LARGE SCALE GENOMIC DNA]</scope>
    <source>
        <strain>ATCC MYA-4605 / CBS 113480</strain>
    </source>
</reference>
<proteinExistence type="inferred from homology"/>
<evidence type="ECO:0000255" key="1">
    <source>
        <dbReference type="HAMAP-Rule" id="MF_03141"/>
    </source>
</evidence>
<feature type="chain" id="PRO_0000405083" description="Nuclear distribution protein PAC1">
    <location>
        <begin position="1"/>
        <end position="461"/>
    </location>
</feature>
<feature type="domain" description="LisH" evidence="1">
    <location>
        <begin position="9"/>
        <end position="41"/>
    </location>
</feature>
<feature type="repeat" description="WD 1">
    <location>
        <begin position="114"/>
        <end position="155"/>
    </location>
</feature>
<feature type="repeat" description="WD 2">
    <location>
        <begin position="157"/>
        <end position="197"/>
    </location>
</feature>
<feature type="repeat" description="WD 3">
    <location>
        <begin position="201"/>
        <end position="248"/>
    </location>
</feature>
<feature type="repeat" description="WD 4">
    <location>
        <begin position="251"/>
        <end position="290"/>
    </location>
</feature>
<feature type="repeat" description="WD 5">
    <location>
        <begin position="312"/>
        <end position="355"/>
    </location>
</feature>
<feature type="repeat" description="WD 6">
    <location>
        <begin position="357"/>
        <end position="396"/>
    </location>
</feature>
<feature type="repeat" description="WD 7">
    <location>
        <begin position="401"/>
        <end position="457"/>
    </location>
</feature>
<gene>
    <name evidence="1" type="primary">PAC1</name>
    <name evidence="1" type="synonym">LIS1</name>
    <name type="ORF">MCYG_07074</name>
</gene>
<sequence length="461" mass="50806">MSPILTNRQAEELHKSIIAYLTANNLLNTANTLRAELNLSENAFDTATAKKYETLLEKKWTSVVRLQKKIMDLESRMSALQTELDNATPISLAKRNKDPASWIPTAPARHALESHRDTINSVAFHPIFSSIASGSDDCTIKIWDWELGELERTIKGHTRAVVDVDFGGPRGGILLASCSSDLSIKLWDPANEYKNIRTLLGHDHSVSAVRFIPLGASGAPSSGNLLVSASRDKSLKIWDVNTGYCVRTLQGHTAWVRDVYPSPDGRFLLSTGDDSTARLWDISVSNPESKVTMFGHDHFNECCALAPSSSYQYLSPLTGLKKPPAASSTAEFMATGSRDKTIKLWDARGTCLMTLVGHDNWIRALAFHPGGKYLFSVSDDRTLRCWDLSQEGKCIKVMRDAHERFITCLRWAPSIFKDTPTGHGAGDGRNGDSKKTEGPDVQIRCVIATGGVDMKLRIFAN</sequence>
<accession>C5FWH1</accession>
<keyword id="KW-0131">Cell cycle</keyword>
<keyword id="KW-0132">Cell division</keyword>
<keyword id="KW-0175">Coiled coil</keyword>
<keyword id="KW-0963">Cytoplasm</keyword>
<keyword id="KW-0206">Cytoskeleton</keyword>
<keyword id="KW-0493">Microtubule</keyword>
<keyword id="KW-0498">Mitosis</keyword>
<keyword id="KW-1185">Reference proteome</keyword>
<keyword id="KW-0677">Repeat</keyword>
<keyword id="KW-0813">Transport</keyword>
<keyword id="KW-0853">WD repeat</keyword>
<organism>
    <name type="scientific">Arthroderma otae (strain ATCC MYA-4605 / CBS 113480)</name>
    <name type="common">Microsporum canis</name>
    <dbReference type="NCBI Taxonomy" id="554155"/>
    <lineage>
        <taxon>Eukaryota</taxon>
        <taxon>Fungi</taxon>
        <taxon>Dikarya</taxon>
        <taxon>Ascomycota</taxon>
        <taxon>Pezizomycotina</taxon>
        <taxon>Eurotiomycetes</taxon>
        <taxon>Eurotiomycetidae</taxon>
        <taxon>Onygenales</taxon>
        <taxon>Arthrodermataceae</taxon>
        <taxon>Microsporum</taxon>
    </lineage>
</organism>
<dbReference type="EMBL" id="DS995706">
    <property type="protein sequence ID" value="EEQ34255.1"/>
    <property type="molecule type" value="Genomic_DNA"/>
</dbReference>
<dbReference type="RefSeq" id="XP_002845110.1">
    <property type="nucleotide sequence ID" value="XM_002845064.1"/>
</dbReference>
<dbReference type="SMR" id="C5FWH1"/>
<dbReference type="STRING" id="554155.C5FWH1"/>
<dbReference type="GeneID" id="9228142"/>
<dbReference type="VEuPathDB" id="FungiDB:MCYG_07074"/>
<dbReference type="eggNOG" id="KOG0295">
    <property type="taxonomic scope" value="Eukaryota"/>
</dbReference>
<dbReference type="HOGENOM" id="CLU_000288_57_15_1"/>
<dbReference type="OMA" id="RGTCLMT"/>
<dbReference type="OrthoDB" id="10264588at2759"/>
<dbReference type="Proteomes" id="UP000002035">
    <property type="component" value="Unassembled WGS sequence"/>
</dbReference>
<dbReference type="GO" id="GO:0005737">
    <property type="term" value="C:cytoplasm"/>
    <property type="evidence" value="ECO:0007669"/>
    <property type="project" value="UniProtKB-UniRule"/>
</dbReference>
<dbReference type="GO" id="GO:0005874">
    <property type="term" value="C:microtubule"/>
    <property type="evidence" value="ECO:0007669"/>
    <property type="project" value="UniProtKB-KW"/>
</dbReference>
<dbReference type="GO" id="GO:0005875">
    <property type="term" value="C:microtubule associated complex"/>
    <property type="evidence" value="ECO:0007669"/>
    <property type="project" value="UniProtKB-UniRule"/>
</dbReference>
<dbReference type="GO" id="GO:0000922">
    <property type="term" value="C:spindle pole"/>
    <property type="evidence" value="ECO:0007669"/>
    <property type="project" value="UniProtKB-SubCell"/>
</dbReference>
<dbReference type="GO" id="GO:1990234">
    <property type="term" value="C:transferase complex"/>
    <property type="evidence" value="ECO:0007669"/>
    <property type="project" value="UniProtKB-ARBA"/>
</dbReference>
<dbReference type="GO" id="GO:0070840">
    <property type="term" value="F:dynein complex binding"/>
    <property type="evidence" value="ECO:0007669"/>
    <property type="project" value="UniProtKB-UniRule"/>
</dbReference>
<dbReference type="GO" id="GO:0051301">
    <property type="term" value="P:cell division"/>
    <property type="evidence" value="ECO:0007669"/>
    <property type="project" value="UniProtKB-KW"/>
</dbReference>
<dbReference type="GO" id="GO:0000132">
    <property type="term" value="P:establishment of mitotic spindle orientation"/>
    <property type="evidence" value="ECO:0007669"/>
    <property type="project" value="UniProtKB-UniRule"/>
</dbReference>
<dbReference type="GO" id="GO:0051012">
    <property type="term" value="P:microtubule sliding"/>
    <property type="evidence" value="ECO:0007669"/>
    <property type="project" value="UniProtKB-UniRule"/>
</dbReference>
<dbReference type="CDD" id="cd00200">
    <property type="entry name" value="WD40"/>
    <property type="match status" value="1"/>
</dbReference>
<dbReference type="FunFam" id="2.130.10.10:FF:000342">
    <property type="entry name" value="Nuclear distribution protein PAC1"/>
    <property type="match status" value="1"/>
</dbReference>
<dbReference type="FunFam" id="1.20.960.30:FF:000002">
    <property type="entry name" value="Platelet-activating factor acetylhydrolase ib"/>
    <property type="match status" value="1"/>
</dbReference>
<dbReference type="Gene3D" id="1.20.960.30">
    <property type="match status" value="1"/>
</dbReference>
<dbReference type="Gene3D" id="2.130.10.10">
    <property type="entry name" value="YVTN repeat-like/Quinoprotein amine dehydrogenase"/>
    <property type="match status" value="1"/>
</dbReference>
<dbReference type="HAMAP" id="MF_03141">
    <property type="entry name" value="lis1"/>
    <property type="match status" value="1"/>
</dbReference>
<dbReference type="InterPro" id="IPR017252">
    <property type="entry name" value="Dynein_regulator_LIS1"/>
</dbReference>
<dbReference type="InterPro" id="IPR020472">
    <property type="entry name" value="G-protein_beta_WD-40_rep"/>
</dbReference>
<dbReference type="InterPro" id="IPR037190">
    <property type="entry name" value="LIS1_N"/>
</dbReference>
<dbReference type="InterPro" id="IPR006594">
    <property type="entry name" value="LisH"/>
</dbReference>
<dbReference type="InterPro" id="IPR056795">
    <property type="entry name" value="PAC1-like_LisH-like_dom"/>
</dbReference>
<dbReference type="InterPro" id="IPR015943">
    <property type="entry name" value="WD40/YVTN_repeat-like_dom_sf"/>
</dbReference>
<dbReference type="InterPro" id="IPR019775">
    <property type="entry name" value="WD40_repeat_CS"/>
</dbReference>
<dbReference type="InterPro" id="IPR036322">
    <property type="entry name" value="WD40_repeat_dom_sf"/>
</dbReference>
<dbReference type="InterPro" id="IPR001680">
    <property type="entry name" value="WD40_rpt"/>
</dbReference>
<dbReference type="PANTHER" id="PTHR22847:SF637">
    <property type="entry name" value="WD REPEAT DOMAIN 5B"/>
    <property type="match status" value="1"/>
</dbReference>
<dbReference type="PANTHER" id="PTHR22847">
    <property type="entry name" value="WD40 REPEAT PROTEIN"/>
    <property type="match status" value="1"/>
</dbReference>
<dbReference type="Pfam" id="PF24951">
    <property type="entry name" value="LisH_PAC1"/>
    <property type="match status" value="1"/>
</dbReference>
<dbReference type="Pfam" id="PF00400">
    <property type="entry name" value="WD40"/>
    <property type="match status" value="6"/>
</dbReference>
<dbReference type="PIRSF" id="PIRSF037647">
    <property type="entry name" value="Dynein_regulator_Lis1"/>
    <property type="match status" value="1"/>
</dbReference>
<dbReference type="PRINTS" id="PR00320">
    <property type="entry name" value="GPROTEINBRPT"/>
</dbReference>
<dbReference type="SMART" id="SM00320">
    <property type="entry name" value="WD40"/>
    <property type="match status" value="7"/>
</dbReference>
<dbReference type="SUPFAM" id="SSF109925">
    <property type="entry name" value="Lissencephaly-1 protein (Lis-1, PAF-AH alpha) N-terminal domain"/>
    <property type="match status" value="1"/>
</dbReference>
<dbReference type="SUPFAM" id="SSF50978">
    <property type="entry name" value="WD40 repeat-like"/>
    <property type="match status" value="1"/>
</dbReference>
<dbReference type="PROSITE" id="PS50896">
    <property type="entry name" value="LISH"/>
    <property type="match status" value="1"/>
</dbReference>
<dbReference type="PROSITE" id="PS00678">
    <property type="entry name" value="WD_REPEATS_1"/>
    <property type="match status" value="3"/>
</dbReference>
<dbReference type="PROSITE" id="PS50082">
    <property type="entry name" value="WD_REPEATS_2"/>
    <property type="match status" value="6"/>
</dbReference>
<dbReference type="PROSITE" id="PS50294">
    <property type="entry name" value="WD_REPEATS_REGION"/>
    <property type="match status" value="1"/>
</dbReference>
<name>LIS1_ARTOC</name>
<protein>
    <recommendedName>
        <fullName evidence="1">Nuclear distribution protein PAC1</fullName>
    </recommendedName>
    <alternativeName>
        <fullName evidence="1">Lissencephaly-1 homolog</fullName>
        <shortName evidence="1">LIS-1</shortName>
    </alternativeName>
    <alternativeName>
        <fullName evidence="1">nudF homolog</fullName>
    </alternativeName>
</protein>
<comment type="function">
    <text evidence="1">Positively regulates the activity of the minus-end directed microtubule motor protein dynein. May enhance dynein-mediated microtubule sliding by targeting dynein to the microtubule plus end. Required for nuclear migration during vegetative growth as well as development. Required for retrograde early endosome (EE) transport from the hyphal tip. Required for localization of dynein to the mitotic spindle poles. Recruits additional proteins to the dynein complex at SPBs.</text>
</comment>
<comment type="subunit">
    <text evidence="1">Self-associates. Interacts with NDL1 and dynein.</text>
</comment>
<comment type="subcellular location">
    <subcellularLocation>
        <location evidence="1">Cytoplasm</location>
        <location evidence="1">Cytoskeleton</location>
    </subcellularLocation>
    <subcellularLocation>
        <location evidence="1">Cytoplasm</location>
        <location evidence="1">Cytoskeleton</location>
        <location evidence="1">Spindle pole</location>
    </subcellularLocation>
    <text evidence="1">Localizes to the plus ends of microtubules at the hyphal tip and the mitotic spindle poles.</text>
</comment>
<comment type="domain">
    <text evidence="1">Dimerization mediated by the LisH domain may be required to activate dynein.</text>
</comment>
<comment type="similarity">
    <text evidence="1">Belongs to the WD repeat LIS1/nudF family.</text>
</comment>